<proteinExistence type="inferred from homology"/>
<feature type="chain" id="PRO_1000076918" description="Lipoprotein signal peptidase">
    <location>
        <begin position="1"/>
        <end position="160"/>
    </location>
</feature>
<feature type="transmembrane region" description="Helical" evidence="1">
    <location>
        <begin position="6"/>
        <end position="26"/>
    </location>
</feature>
<feature type="transmembrane region" description="Helical" evidence="1">
    <location>
        <begin position="58"/>
        <end position="78"/>
    </location>
</feature>
<feature type="transmembrane region" description="Helical" evidence="1">
    <location>
        <begin position="95"/>
        <end position="115"/>
    </location>
</feature>
<feature type="transmembrane region" description="Helical" evidence="1">
    <location>
        <begin position="127"/>
        <end position="147"/>
    </location>
</feature>
<feature type="active site" evidence="1">
    <location>
        <position position="117"/>
    </location>
</feature>
<feature type="active site" evidence="1">
    <location>
        <position position="135"/>
    </location>
</feature>
<organism>
    <name type="scientific">Brucella canis (strain ATCC 23365 / NCTC 10854 / RM-666)</name>
    <dbReference type="NCBI Taxonomy" id="483179"/>
    <lineage>
        <taxon>Bacteria</taxon>
        <taxon>Pseudomonadati</taxon>
        <taxon>Pseudomonadota</taxon>
        <taxon>Alphaproteobacteria</taxon>
        <taxon>Hyphomicrobiales</taxon>
        <taxon>Brucellaceae</taxon>
        <taxon>Brucella/Ochrobactrum group</taxon>
        <taxon>Brucella</taxon>
    </lineage>
</organism>
<protein>
    <recommendedName>
        <fullName evidence="1">Lipoprotein signal peptidase</fullName>
        <ecNumber evidence="1">3.4.23.36</ecNumber>
    </recommendedName>
    <alternativeName>
        <fullName evidence="1">Prolipoprotein signal peptidase</fullName>
    </alternativeName>
    <alternativeName>
        <fullName evidence="1">Signal peptidase II</fullName>
        <shortName evidence="1">SPase II</shortName>
    </alternativeName>
</protein>
<sequence length="160" mass="18230">MKRHAVWSSLFVVILAVLIDQGIKYLVESRMFYGQQIDLLPFLALFRTHNEGIAFSMLAWLHDGGLIAITLAVIAFVLYLWWTNAPERVFARYGFALVIGGAIGNLIDRVMHGYVVDYVLFHLPTWSFAVFNLADAFITIGAGLIILEEFLGWRRERISH</sequence>
<keyword id="KW-0064">Aspartyl protease</keyword>
<keyword id="KW-0997">Cell inner membrane</keyword>
<keyword id="KW-1003">Cell membrane</keyword>
<keyword id="KW-0378">Hydrolase</keyword>
<keyword id="KW-0472">Membrane</keyword>
<keyword id="KW-0645">Protease</keyword>
<keyword id="KW-1185">Reference proteome</keyword>
<keyword id="KW-0812">Transmembrane</keyword>
<keyword id="KW-1133">Transmembrane helix</keyword>
<reference key="1">
    <citation type="submission" date="2007-10" db="EMBL/GenBank/DDBJ databases">
        <title>Brucella canis ATCC 23365 whole genome shotgun sequencing project.</title>
        <authorList>
            <person name="Setubal J.C."/>
            <person name="Bowns C."/>
            <person name="Boyle S."/>
            <person name="Crasta O.R."/>
            <person name="Czar M.J."/>
            <person name="Dharmanolla C."/>
            <person name="Gillespie J.J."/>
            <person name="Kenyon R.W."/>
            <person name="Lu J."/>
            <person name="Mane S."/>
            <person name="Mohapatra S."/>
            <person name="Nagrani S."/>
            <person name="Purkayastha A."/>
            <person name="Rajasimha H.K."/>
            <person name="Shallom J.M."/>
            <person name="Shallom S."/>
            <person name="Shukla M."/>
            <person name="Snyder E.E."/>
            <person name="Sobral B.W."/>
            <person name="Wattam A.R."/>
            <person name="Will R."/>
            <person name="Williams K."/>
            <person name="Yoo H."/>
            <person name="Bruce D."/>
            <person name="Detter C."/>
            <person name="Munk C."/>
            <person name="Brettin T.S."/>
        </authorList>
    </citation>
    <scope>NUCLEOTIDE SEQUENCE [LARGE SCALE GENOMIC DNA]</scope>
    <source>
        <strain>ATCC 23365 / NCTC 10854 / RM-666</strain>
    </source>
</reference>
<accession>A9M794</accession>
<dbReference type="EC" id="3.4.23.36" evidence="1"/>
<dbReference type="EMBL" id="CP000872">
    <property type="protein sequence ID" value="ABX61253.1"/>
    <property type="molecule type" value="Genomic_DNA"/>
</dbReference>
<dbReference type="RefSeq" id="WP_002965397.1">
    <property type="nucleotide sequence ID" value="NC_010103.1"/>
</dbReference>
<dbReference type="SMR" id="A9M794"/>
<dbReference type="GeneID" id="97534439"/>
<dbReference type="KEGG" id="bcs:BCAN_A0154"/>
<dbReference type="HOGENOM" id="CLU_083252_4_3_5"/>
<dbReference type="PhylomeDB" id="A9M794"/>
<dbReference type="UniPathway" id="UPA00665"/>
<dbReference type="Proteomes" id="UP000001385">
    <property type="component" value="Chromosome I"/>
</dbReference>
<dbReference type="GO" id="GO:0005886">
    <property type="term" value="C:plasma membrane"/>
    <property type="evidence" value="ECO:0007669"/>
    <property type="project" value="UniProtKB-SubCell"/>
</dbReference>
<dbReference type="GO" id="GO:0004190">
    <property type="term" value="F:aspartic-type endopeptidase activity"/>
    <property type="evidence" value="ECO:0007669"/>
    <property type="project" value="UniProtKB-UniRule"/>
</dbReference>
<dbReference type="GO" id="GO:0006508">
    <property type="term" value="P:proteolysis"/>
    <property type="evidence" value="ECO:0007669"/>
    <property type="project" value="UniProtKB-KW"/>
</dbReference>
<dbReference type="HAMAP" id="MF_00161">
    <property type="entry name" value="LspA"/>
    <property type="match status" value="1"/>
</dbReference>
<dbReference type="InterPro" id="IPR001872">
    <property type="entry name" value="Peptidase_A8"/>
</dbReference>
<dbReference type="NCBIfam" id="TIGR00077">
    <property type="entry name" value="lspA"/>
    <property type="match status" value="1"/>
</dbReference>
<dbReference type="PANTHER" id="PTHR33695">
    <property type="entry name" value="LIPOPROTEIN SIGNAL PEPTIDASE"/>
    <property type="match status" value="1"/>
</dbReference>
<dbReference type="PANTHER" id="PTHR33695:SF1">
    <property type="entry name" value="LIPOPROTEIN SIGNAL PEPTIDASE"/>
    <property type="match status" value="1"/>
</dbReference>
<dbReference type="Pfam" id="PF01252">
    <property type="entry name" value="Peptidase_A8"/>
    <property type="match status" value="1"/>
</dbReference>
<dbReference type="PRINTS" id="PR00781">
    <property type="entry name" value="LIPOSIGPTASE"/>
</dbReference>
<dbReference type="PROSITE" id="PS00855">
    <property type="entry name" value="SPASE_II"/>
    <property type="match status" value="1"/>
</dbReference>
<gene>
    <name evidence="1" type="primary">lspA</name>
    <name type="ordered locus">BCAN_A0154</name>
</gene>
<name>LSPA_BRUC2</name>
<comment type="function">
    <text evidence="1">This protein specifically catalyzes the removal of signal peptides from prolipoproteins.</text>
</comment>
<comment type="catalytic activity">
    <reaction evidence="1">
        <text>Release of signal peptides from bacterial membrane prolipoproteins. Hydrolyzes -Xaa-Yaa-Zaa-|-(S,diacylglyceryl)Cys-, in which Xaa is hydrophobic (preferably Leu), and Yaa (Ala or Ser) and Zaa (Gly or Ala) have small, neutral side chains.</text>
        <dbReference type="EC" id="3.4.23.36"/>
    </reaction>
</comment>
<comment type="pathway">
    <text evidence="1">Protein modification; lipoprotein biosynthesis (signal peptide cleavage).</text>
</comment>
<comment type="subcellular location">
    <subcellularLocation>
        <location evidence="1">Cell inner membrane</location>
        <topology evidence="1">Multi-pass membrane protein</topology>
    </subcellularLocation>
</comment>
<comment type="similarity">
    <text evidence="1">Belongs to the peptidase A8 family.</text>
</comment>
<evidence type="ECO:0000255" key="1">
    <source>
        <dbReference type="HAMAP-Rule" id="MF_00161"/>
    </source>
</evidence>